<evidence type="ECO:0000250" key="1">
    <source>
        <dbReference type="UniProtKB" id="P06935"/>
    </source>
</evidence>
<evidence type="ECO:0000250" key="2">
    <source>
        <dbReference type="UniProtKB" id="P14336"/>
    </source>
</evidence>
<evidence type="ECO:0000250" key="3">
    <source>
        <dbReference type="UniProtKB" id="P17763"/>
    </source>
</evidence>
<evidence type="ECO:0000255" key="4"/>
<evidence type="ECO:0000255" key="5">
    <source>
        <dbReference type="PROSITE-ProRule" id="PRU00498"/>
    </source>
</evidence>
<organism>
    <name type="scientific">Louping ill virus (strain Negishi 3248/49/P10)</name>
    <name type="common">Li</name>
    <dbReference type="NCBI Taxonomy" id="36388"/>
    <lineage>
        <taxon>Viruses</taxon>
        <taxon>Riboviria</taxon>
        <taxon>Orthornavirae</taxon>
        <taxon>Kitrinoviricota</taxon>
        <taxon>Flasuviricetes</taxon>
        <taxon>Amarillovirales</taxon>
        <taxon>Flaviviridae</taxon>
        <taxon>Orthoflavivirus</taxon>
        <taxon>Orthoflavivirus loupingi</taxon>
    </lineage>
</organism>
<proteinExistence type="inferred from homology"/>
<protein>
    <recommendedName>
        <fullName>Genome polyprotein</fullName>
    </recommendedName>
    <component>
        <recommendedName>
            <fullName>Envelope protein E</fullName>
        </recommendedName>
    </component>
</protein>
<feature type="chain" id="PRO_0000405185" description="Genome polyprotein">
    <location>
        <begin position="1" status="less than"/>
        <end position="496" status="greater than"/>
    </location>
</feature>
<feature type="chain" id="PRO_0000037833" description="Envelope protein E" evidence="1">
    <location>
        <begin position="1"/>
        <end position="496"/>
    </location>
</feature>
<feature type="topological domain" description="Extracellular" evidence="4">
    <location>
        <begin position="1" status="less than"/>
        <end position="447"/>
    </location>
</feature>
<feature type="transmembrane region" description="Helical" evidence="4">
    <location>
        <begin position="448"/>
        <end position="468"/>
    </location>
</feature>
<feature type="topological domain" description="Cytoplasmic" evidence="4">
    <location>
        <begin position="469"/>
        <end position="479"/>
    </location>
</feature>
<feature type="transmembrane region" description="Helical" evidence="4">
    <location>
        <begin position="480"/>
        <end position="496" status="greater than"/>
    </location>
</feature>
<feature type="region of interest" description="Fusion peptide" evidence="2">
    <location>
        <begin position="98"/>
        <end position="111"/>
    </location>
</feature>
<feature type="glycosylation site" description="N-linked (GlcNAc...) asparagine; by host" evidence="5">
    <location>
        <position position="154"/>
    </location>
</feature>
<feature type="disulfide bond" evidence="2">
    <location>
        <begin position="3"/>
        <end position="30"/>
    </location>
</feature>
<feature type="disulfide bond" evidence="3">
    <location>
        <begin position="60"/>
        <end position="121"/>
    </location>
</feature>
<feature type="disulfide bond" evidence="2">
    <location>
        <begin position="60"/>
        <end position="116"/>
    </location>
</feature>
<feature type="disulfide bond" evidence="2">
    <location>
        <begin position="74"/>
        <end position="105"/>
    </location>
</feature>
<feature type="disulfide bond" evidence="2">
    <location>
        <begin position="92"/>
        <end position="121"/>
    </location>
</feature>
<feature type="disulfide bond" evidence="3">
    <location>
        <begin position="92"/>
        <end position="116"/>
    </location>
</feature>
<feature type="disulfide bond" evidence="2">
    <location>
        <begin position="186"/>
        <end position="290"/>
    </location>
</feature>
<feature type="disulfide bond" evidence="2">
    <location>
        <begin position="307"/>
        <end position="338"/>
    </location>
</feature>
<feature type="non-terminal residue">
    <location>
        <position position="1"/>
    </location>
</feature>
<feature type="non-terminal residue">
    <location>
        <position position="496"/>
    </location>
</feature>
<name>POLG_LIVN1</name>
<keyword id="KW-1165">Clathrin-mediated endocytosis of virus by host</keyword>
<keyword id="KW-0165">Cleavage on pair of basic residues</keyword>
<keyword id="KW-1015">Disulfide bond</keyword>
<keyword id="KW-1170">Fusion of virus membrane with host endosomal membrane</keyword>
<keyword id="KW-1168">Fusion of virus membrane with host membrane</keyword>
<keyword id="KW-0325">Glycoprotein</keyword>
<keyword id="KW-1038">Host endoplasmic reticulum</keyword>
<keyword id="KW-1043">Host membrane</keyword>
<keyword id="KW-0945">Host-virus interaction</keyword>
<keyword id="KW-1090">Inhibition of host innate immune response by virus</keyword>
<keyword id="KW-0472">Membrane</keyword>
<keyword id="KW-0941">Suppressor of RNA silencing</keyword>
<keyword id="KW-0812">Transmembrane</keyword>
<keyword id="KW-1133">Transmembrane helix</keyword>
<keyword id="KW-1161">Viral attachment to host cell</keyword>
<keyword id="KW-0261">Viral envelope protein</keyword>
<keyword id="KW-0899">Viral immunoevasion</keyword>
<keyword id="KW-1162">Viral penetration into host cytoplasm</keyword>
<keyword id="KW-0946">Virion</keyword>
<keyword id="KW-1164">Virus endocytosis by host</keyword>
<keyword id="KW-1160">Virus entry into host cell</keyword>
<keyword id="KW-0862">Zinc</keyword>
<comment type="function">
    <molecule>Envelope protein E</molecule>
    <text evidence="3">Binds to host cell surface receptor and mediates fusion between viral and cellular membranes. Envelope protein is synthesized in the endoplasmic reticulum in the form of heterodimer with protein prM. They play a role in virion budding in the ER, and the newly formed immature particle is covered with 60 spikes composed of heterodimer between precursor prM and envelope protein E. The virion is transported to the Golgi apparatus where the low pH causes dissociation of PrM-E heterodimers and formation of E homodimers. prM-E cleavage is ineficient, and many virions are only partially matured. These uncleaved prM would play a role in immune evasion.</text>
</comment>
<comment type="subunit">
    <molecule>Envelope protein E</molecule>
    <text evidence="3">Homodimer; in the endoplasmic reticulum and Golgi.</text>
</comment>
<comment type="subcellular location">
    <molecule>Envelope protein E</molecule>
    <subcellularLocation>
        <location evidence="3">Virion membrane</location>
        <topology evidence="4">Multi-pass membrane protein</topology>
    </subcellularLocation>
    <subcellularLocation>
        <location evidence="3">Host endoplasmic reticulum membrane</location>
        <topology evidence="4">Multi-pass membrane protein</topology>
    </subcellularLocation>
</comment>
<comment type="PTM">
    <molecule>Envelope protein E</molecule>
    <text evidence="3">N-glycosylated.</text>
</comment>
<organismHost>
    <name type="scientific">Bos taurus</name>
    <name type="common">Bovine</name>
    <dbReference type="NCBI Taxonomy" id="9913"/>
</organismHost>
<organismHost>
    <name type="scientific">Canis lupus familiaris</name>
    <name type="common">Dog</name>
    <name type="synonym">Canis familiaris</name>
    <dbReference type="NCBI Taxonomy" id="9615"/>
</organismHost>
<organismHost>
    <name type="scientific">Cervinae</name>
    <dbReference type="NCBI Taxonomy" id="34878"/>
</organismHost>
<organismHost>
    <name type="scientific">Equus caballus</name>
    <name type="common">Horse</name>
    <dbReference type="NCBI Taxonomy" id="9796"/>
</organismHost>
<organismHost>
    <name type="scientific">Homo sapiens</name>
    <name type="common">Human</name>
    <dbReference type="NCBI Taxonomy" id="9606"/>
</organismHost>
<organismHost>
    <name type="scientific">Ixodes ricinus</name>
    <name type="common">Common tick</name>
    <name type="synonym">Acarus ricinus</name>
    <dbReference type="NCBI Taxonomy" id="34613"/>
</organismHost>
<organismHost>
    <name type="scientific">Ovis aries</name>
    <name type="common">Sheep</name>
    <dbReference type="NCBI Taxonomy" id="9940"/>
</organismHost>
<organismHost>
    <name type="scientific">Sus scrofa</name>
    <name type="common">Pig</name>
    <dbReference type="NCBI Taxonomy" id="9823"/>
</organismHost>
<dbReference type="EMBL" id="M94956">
    <property type="protein sequence ID" value="AAA46678.1"/>
    <property type="molecule type" value="Genomic_RNA"/>
</dbReference>
<dbReference type="SMR" id="Q02478"/>
<dbReference type="GO" id="GO:0044167">
    <property type="term" value="C:host cell endoplasmic reticulum membrane"/>
    <property type="evidence" value="ECO:0007669"/>
    <property type="project" value="UniProtKB-SubCell"/>
</dbReference>
<dbReference type="GO" id="GO:0016020">
    <property type="term" value="C:membrane"/>
    <property type="evidence" value="ECO:0007669"/>
    <property type="project" value="UniProtKB-KW"/>
</dbReference>
<dbReference type="GO" id="GO:0019031">
    <property type="term" value="C:viral envelope"/>
    <property type="evidence" value="ECO:0007669"/>
    <property type="project" value="UniProtKB-KW"/>
</dbReference>
<dbReference type="GO" id="GO:0055036">
    <property type="term" value="C:virion membrane"/>
    <property type="evidence" value="ECO:0007669"/>
    <property type="project" value="UniProtKB-SubCell"/>
</dbReference>
<dbReference type="GO" id="GO:0046983">
    <property type="term" value="F:protein dimerization activity"/>
    <property type="evidence" value="ECO:0007669"/>
    <property type="project" value="InterPro"/>
</dbReference>
<dbReference type="GO" id="GO:0075512">
    <property type="term" value="P:clathrin-dependent endocytosis of virus by host cell"/>
    <property type="evidence" value="ECO:0007669"/>
    <property type="project" value="UniProtKB-KW"/>
</dbReference>
<dbReference type="GO" id="GO:0039654">
    <property type="term" value="P:fusion of virus membrane with host endosome membrane"/>
    <property type="evidence" value="ECO:0007669"/>
    <property type="project" value="UniProtKB-KW"/>
</dbReference>
<dbReference type="GO" id="GO:0052170">
    <property type="term" value="P:symbiont-mediated suppression of host innate immune response"/>
    <property type="evidence" value="ECO:0007669"/>
    <property type="project" value="UniProtKB-KW"/>
</dbReference>
<dbReference type="GO" id="GO:0019062">
    <property type="term" value="P:virion attachment to host cell"/>
    <property type="evidence" value="ECO:0007669"/>
    <property type="project" value="UniProtKB-KW"/>
</dbReference>
<dbReference type="CDD" id="cd12149">
    <property type="entry name" value="Flavi_E_C"/>
    <property type="match status" value="1"/>
</dbReference>
<dbReference type="FunFam" id="1.20.1280.260:FF:000001">
    <property type="entry name" value="Envelope glycoprotein"/>
    <property type="match status" value="1"/>
</dbReference>
<dbReference type="FunFam" id="2.60.40.350:FF:000003">
    <property type="entry name" value="Genome polyprotein"/>
    <property type="match status" value="1"/>
</dbReference>
<dbReference type="Gene3D" id="1.20.1280.260">
    <property type="match status" value="1"/>
</dbReference>
<dbReference type="Gene3D" id="2.60.40.350">
    <property type="match status" value="1"/>
</dbReference>
<dbReference type="Gene3D" id="2.60.98.10">
    <property type="entry name" value="Tick-borne Encephalitis virus Glycoprotein, domain 1"/>
    <property type="match status" value="1"/>
</dbReference>
<dbReference type="Gene3D" id="3.30.67.10">
    <property type="entry name" value="Viral Envelope Glycoprotein, domain 2"/>
    <property type="match status" value="1"/>
</dbReference>
<dbReference type="Gene3D" id="3.30.387.10">
    <property type="entry name" value="Viral Envelope Glycoprotein, domain 3"/>
    <property type="match status" value="1"/>
</dbReference>
<dbReference type="InterPro" id="IPR013755">
    <property type="entry name" value="Flav_gly_cen_dom_subdom1"/>
</dbReference>
<dbReference type="InterPro" id="IPR027287">
    <property type="entry name" value="Flavi_E_Ig-like"/>
</dbReference>
<dbReference type="InterPro" id="IPR026470">
    <property type="entry name" value="Flavi_E_Stem/Anchor_dom"/>
</dbReference>
<dbReference type="InterPro" id="IPR038345">
    <property type="entry name" value="Flavi_E_Stem/Anchor_dom_sf"/>
</dbReference>
<dbReference type="InterPro" id="IPR011998">
    <property type="entry name" value="Flavi_Glycoprot_E_cen/dimer"/>
</dbReference>
<dbReference type="InterPro" id="IPR000336">
    <property type="entry name" value="Flavivir/Alphavir_Ig-like_sf"/>
</dbReference>
<dbReference type="InterPro" id="IPR036253">
    <property type="entry name" value="Glycoprot_cen/dimer_sf"/>
</dbReference>
<dbReference type="InterPro" id="IPR038055">
    <property type="entry name" value="Glycoprot_E_dimer_dom"/>
</dbReference>
<dbReference type="InterPro" id="IPR013756">
    <property type="entry name" value="GlyE_cen_dom_subdom2"/>
</dbReference>
<dbReference type="InterPro" id="IPR014756">
    <property type="entry name" value="Ig_E-set"/>
</dbReference>
<dbReference type="NCBIfam" id="TIGR04240">
    <property type="entry name" value="flavi_E_stem"/>
    <property type="match status" value="1"/>
</dbReference>
<dbReference type="Pfam" id="PF21659">
    <property type="entry name" value="Flavi_E_stem"/>
    <property type="match status" value="1"/>
</dbReference>
<dbReference type="Pfam" id="PF02832">
    <property type="entry name" value="Flavi_glycop_C"/>
    <property type="match status" value="1"/>
</dbReference>
<dbReference type="Pfam" id="PF00869">
    <property type="entry name" value="Flavi_glycoprot"/>
    <property type="match status" value="1"/>
</dbReference>
<dbReference type="SUPFAM" id="SSF81296">
    <property type="entry name" value="E set domains"/>
    <property type="match status" value="1"/>
</dbReference>
<dbReference type="SUPFAM" id="SSF56983">
    <property type="entry name" value="Viral glycoprotein, central and dimerisation domains"/>
    <property type="match status" value="1"/>
</dbReference>
<reference key="1">
    <citation type="journal article" date="1992" name="Virology">
        <title>Nucleotide sequence of the envelope glycoprotein of Negishi virus shows very close homology to louping ill virus.</title>
        <authorList>
            <person name="Venugopal K."/>
            <person name="Buckley A."/>
            <person name="Reid H.W."/>
            <person name="Gould E.A."/>
        </authorList>
    </citation>
    <scope>NUCLEOTIDE SEQUENCE [GENOMIC RNA]</scope>
</reference>
<sequence>SRCTHLENRDFVTGTQGTTRVTLVLELGGCVTITAEGKPSVDVWLDAIYQESPAKTREYCLHAKLSETKVAARCPTMGPAVLTEEHQIGTVCKRDQSDRGWGNHCGLFGKGSIVACVKAACEAKKKATGYVYDANKIVYTVKVEPHTGDYVAANETHKGRKTTTFTVSSEKTILTLGEYGDVSLLCRVASGVNLAQTIILELDKTAEHLPTAWQVHRDWFNDLALPWKHDGNPHWNNAERLVEFGVPHAVKMDVYNLGDQTGVLLKALAGVPVAHIEGNKYHLKSGHVTCEVGLENLKMKGLTYTMCDKSKFTWKRTPTDSGHDTVVMEVTFSGSKPCRIPVRAVAHGSPDVNVAMLITPNPTIENDGGGFIEMQLPPGDNIIYVGELSHQWFQTGSSIGRVFQTTRKGIERLTVIGEHAWDFGSAGGFFSSIGKAVHTVLGGAFNSIFGGVGFLPKLLMGVALAWLGLNTRNPTMSMSFLLAGGLVLAMTLGVGA</sequence>
<accession>Q02478</accession>